<gene>
    <name type="primary">Pcdh15</name>
</gene>
<organism>
    <name type="scientific">Gallus gallus</name>
    <name type="common">Chicken</name>
    <dbReference type="NCBI Taxonomy" id="9031"/>
    <lineage>
        <taxon>Eukaryota</taxon>
        <taxon>Metazoa</taxon>
        <taxon>Chordata</taxon>
        <taxon>Craniata</taxon>
        <taxon>Vertebrata</taxon>
        <taxon>Euteleostomi</taxon>
        <taxon>Archelosauria</taxon>
        <taxon>Archosauria</taxon>
        <taxon>Dinosauria</taxon>
        <taxon>Saurischia</taxon>
        <taxon>Theropoda</taxon>
        <taxon>Coelurosauria</taxon>
        <taxon>Aves</taxon>
        <taxon>Neognathae</taxon>
        <taxon>Galloanserae</taxon>
        <taxon>Galliformes</taxon>
        <taxon>Phasianidae</taxon>
        <taxon>Phasianinae</taxon>
        <taxon>Gallus</taxon>
    </lineage>
</organism>
<accession>Q0ZM14</accession>
<accession>F1N8B3</accession>
<accession>Q0ZM04</accession>
<accession>Q0ZM05</accession>
<accession>Q0ZM06</accession>
<accession>Q0ZM07</accession>
<accession>Q0ZM08</accession>
<accession>Q0ZM09</accession>
<accession>Q0ZM10</accession>
<accession>Q0ZM11</accession>
<accession>Q0ZM12</accession>
<accession>Q0ZM13</accession>
<comment type="function">
    <text evidence="1">Calcium-dependent cell-adhesion protein. Required for inner ear neuroepithelial cell elaboration and cochlear function. Probably involved in the maintenance of normal retinal function (By similarity).</text>
</comment>
<comment type="subcellular location">
    <subcellularLocation>
        <location evidence="1">Cell membrane</location>
        <topology evidence="1">Single-pass type I membrane protein</topology>
    </subcellularLocation>
</comment>
<comment type="alternative products">
    <event type="alternative splicing"/>
    <isoform>
        <id>Q0ZM14-1</id>
        <name>1</name>
        <name>CD1-1</name>
        <sequence type="displayed"/>
    </isoform>
    <isoform>
        <id>Q0ZM14-2</id>
        <name>2</name>
        <name>CD1-2</name>
        <sequence type="described" ref="VSP_047426 VSP_047427"/>
    </isoform>
    <isoform>
        <id>Q0ZM14-3</id>
        <name>3</name>
        <name>CD2/3-1</name>
        <sequence type="described" ref="VSP_047435"/>
    </isoform>
    <isoform>
        <id>Q0ZM14-4</id>
        <name>4</name>
        <name>CD3-1</name>
        <sequence type="described" ref="VSP_047436"/>
    </isoform>
    <isoform>
        <id>Q0ZM14-5</id>
        <name>5</name>
        <name>CD3-2</name>
        <sequence type="described" ref="VSP_047431 VSP_047434"/>
    </isoform>
    <isoform>
        <id>Q0ZM14-6</id>
        <name>6</name>
        <name>CD3-3</name>
        <sequence type="described" ref="VSP_047429 VSP_047430"/>
    </isoform>
    <isoform>
        <id>Q0ZM14-7</id>
        <name>7</name>
        <name>CD3-4</name>
        <sequence type="described" ref="VSP_047428 VSP_047433"/>
    </isoform>
    <isoform>
        <id>Q0ZM14-8</id>
        <name>8</name>
        <name>CD3-5</name>
        <sequence type="described" ref="VSP_047425 VSP_047432"/>
    </isoform>
    <isoform>
        <id>Q0ZM14-9</id>
        <name>9</name>
        <name>CD3-6</name>
        <sequence type="described" ref="VSP_047419 VSP_047420 VSP_047436"/>
    </isoform>
    <isoform>
        <id>Q0ZM14-10</id>
        <name>10</name>
        <name>CD3-7</name>
        <sequence type="described" ref="VSP_047423 VSP_047424"/>
    </isoform>
    <isoform>
        <id>Q0ZM14-11</id>
        <name>11</name>
        <name>CD3-8</name>
        <sequence type="described" ref="VSP_047421 VSP_047422"/>
    </isoform>
</comment>
<comment type="tissue specificity">
    <text evidence="5">In the utricle, localizes to the distal region of the kinocilium and near the tips of the stereocilia.</text>
</comment>
<comment type="sequence caution" evidence="7">
    <conflict type="erroneous translation">
        <sequence resource="EMBL-CDS" id="ABC79291"/>
    </conflict>
    <text>Wrong choice of frame.</text>
</comment>
<comment type="sequence caution" evidence="7">
    <conflict type="erroneous translation">
        <sequence resource="EMBL-CDS" id="ABC79292"/>
    </conflict>
    <text>Wrong choice of frame.</text>
</comment>
<keyword id="KW-0025">Alternative splicing</keyword>
<keyword id="KW-0106">Calcium</keyword>
<keyword id="KW-0130">Cell adhesion</keyword>
<keyword id="KW-1003">Cell membrane</keyword>
<keyword id="KW-0903">Direct protein sequencing</keyword>
<keyword id="KW-1015">Disulfide bond</keyword>
<keyword id="KW-0472">Membrane</keyword>
<keyword id="KW-1185">Reference proteome</keyword>
<keyword id="KW-0677">Repeat</keyword>
<keyword id="KW-0732">Signal</keyword>
<keyword id="KW-0812">Transmembrane</keyword>
<keyword id="KW-1133">Transmembrane helix</keyword>
<dbReference type="EMBL" id="DQ354419">
    <property type="protein sequence ID" value="ABC79282.1"/>
    <property type="molecule type" value="mRNA"/>
</dbReference>
<dbReference type="EMBL" id="DQ354420">
    <property type="protein sequence ID" value="ABC79283.1"/>
    <property type="molecule type" value="mRNA"/>
</dbReference>
<dbReference type="EMBL" id="DQ354421">
    <property type="protein sequence ID" value="ABC79284.1"/>
    <property type="molecule type" value="mRNA"/>
</dbReference>
<dbReference type="EMBL" id="DQ354422">
    <property type="protein sequence ID" value="ABC79285.1"/>
    <property type="molecule type" value="mRNA"/>
</dbReference>
<dbReference type="EMBL" id="DQ354423">
    <property type="protein sequence ID" value="ABC79286.1"/>
    <property type="molecule type" value="mRNA"/>
</dbReference>
<dbReference type="EMBL" id="DQ354424">
    <property type="protein sequence ID" value="ABC79287.1"/>
    <property type="molecule type" value="mRNA"/>
</dbReference>
<dbReference type="EMBL" id="DQ354425">
    <property type="protein sequence ID" value="ABC79288.1"/>
    <property type="molecule type" value="mRNA"/>
</dbReference>
<dbReference type="EMBL" id="DQ354426">
    <property type="protein sequence ID" value="ABC79289.1"/>
    <property type="molecule type" value="mRNA"/>
</dbReference>
<dbReference type="EMBL" id="DQ354427">
    <property type="protein sequence ID" value="ABC79290.1"/>
    <property type="molecule type" value="mRNA"/>
</dbReference>
<dbReference type="EMBL" id="DQ354428">
    <property type="protein sequence ID" value="ABC79291.1"/>
    <property type="status" value="ALT_SEQ"/>
    <property type="molecule type" value="mRNA"/>
</dbReference>
<dbReference type="EMBL" id="DQ354429">
    <property type="protein sequence ID" value="ABC79292.1"/>
    <property type="status" value="ALT_SEQ"/>
    <property type="molecule type" value="mRNA"/>
</dbReference>
<dbReference type="EMBL" id="AADN03005146">
    <property type="status" value="NOT_ANNOTATED_CDS"/>
    <property type="molecule type" value="Genomic_DNA"/>
</dbReference>
<dbReference type="EMBL" id="AADN02035256">
    <property type="status" value="NOT_ANNOTATED_CDS"/>
    <property type="molecule type" value="Genomic_DNA"/>
</dbReference>
<dbReference type="EMBL" id="AADN02035257">
    <property type="status" value="NOT_ANNOTATED_CDS"/>
    <property type="molecule type" value="Genomic_DNA"/>
</dbReference>
<dbReference type="EMBL" id="AADN02035258">
    <property type="status" value="NOT_ANNOTATED_CDS"/>
    <property type="molecule type" value="Genomic_DNA"/>
</dbReference>
<dbReference type="RefSeq" id="NP_001038119.1">
    <property type="nucleotide sequence ID" value="NM_001044654.1"/>
</dbReference>
<dbReference type="RefSeq" id="XP_015143569.1">
    <property type="nucleotide sequence ID" value="XM_015288083.1"/>
</dbReference>
<dbReference type="RefSeq" id="XP_015143573.1">
    <property type="nucleotide sequence ID" value="XM_015288087.1"/>
</dbReference>
<dbReference type="SMR" id="Q0ZM14"/>
<dbReference type="FunCoup" id="Q0ZM14">
    <property type="interactions" value="17"/>
</dbReference>
<dbReference type="STRING" id="9031.ENSGALP00000004315"/>
<dbReference type="PaxDb" id="9031-ENSGALP00000004315"/>
<dbReference type="Ensembl" id="ENSGALT00010022011.1">
    <molecule id="Q0ZM14-2"/>
    <property type="protein sequence ID" value="ENSGALP00010012617.1"/>
    <property type="gene ID" value="ENSGALG00010009210.1"/>
</dbReference>
<dbReference type="Ensembl" id="ENSGALT00010022014.1">
    <molecule id="Q0ZM14-7"/>
    <property type="protein sequence ID" value="ENSGALP00010012619.1"/>
    <property type="gene ID" value="ENSGALG00010009210.1"/>
</dbReference>
<dbReference type="GeneID" id="423644"/>
<dbReference type="KEGG" id="gga:423644"/>
<dbReference type="CTD" id="65217"/>
<dbReference type="VEuPathDB" id="HostDB:geneid_423644"/>
<dbReference type="eggNOG" id="KOG3594">
    <property type="taxonomic scope" value="Eukaryota"/>
</dbReference>
<dbReference type="GeneTree" id="ENSGT00940000156675"/>
<dbReference type="HOGENOM" id="CLU_001945_0_0_1"/>
<dbReference type="InParanoid" id="Q0ZM14"/>
<dbReference type="OrthoDB" id="10029135at2759"/>
<dbReference type="PhylomeDB" id="Q0ZM14"/>
<dbReference type="TreeFam" id="TF326779"/>
<dbReference type="PRO" id="PR:Q0ZM14"/>
<dbReference type="Proteomes" id="UP000000539">
    <property type="component" value="Chromosome 6"/>
</dbReference>
<dbReference type="Bgee" id="ENSGALG00000002744">
    <property type="expression patterns" value="Expressed in testis and 7 other cell types or tissues"/>
</dbReference>
<dbReference type="GO" id="GO:0005886">
    <property type="term" value="C:plasma membrane"/>
    <property type="evidence" value="ECO:0000318"/>
    <property type="project" value="GO_Central"/>
</dbReference>
<dbReference type="GO" id="GO:0032420">
    <property type="term" value="C:stereocilium"/>
    <property type="evidence" value="ECO:0007669"/>
    <property type="project" value="InterPro"/>
</dbReference>
<dbReference type="GO" id="GO:0005509">
    <property type="term" value="F:calcium ion binding"/>
    <property type="evidence" value="ECO:0007669"/>
    <property type="project" value="InterPro"/>
</dbReference>
<dbReference type="GO" id="GO:0007155">
    <property type="term" value="P:cell adhesion"/>
    <property type="evidence" value="ECO:0000318"/>
    <property type="project" value="GO_Central"/>
</dbReference>
<dbReference type="GO" id="GO:0007156">
    <property type="term" value="P:homophilic cell adhesion via plasma membrane adhesion molecules"/>
    <property type="evidence" value="ECO:0007669"/>
    <property type="project" value="InterPro"/>
</dbReference>
<dbReference type="GO" id="GO:0048839">
    <property type="term" value="P:inner ear development"/>
    <property type="evidence" value="ECO:0007669"/>
    <property type="project" value="InterPro"/>
</dbReference>
<dbReference type="GO" id="GO:0007605">
    <property type="term" value="P:sensory perception of sound"/>
    <property type="evidence" value="ECO:0007669"/>
    <property type="project" value="InterPro"/>
</dbReference>
<dbReference type="CDD" id="cd11304">
    <property type="entry name" value="Cadherin_repeat"/>
    <property type="match status" value="10"/>
</dbReference>
<dbReference type="FunFam" id="2.60.40.3430:FF:000001">
    <property type="entry name" value="protocadherin-15 isoform X1"/>
    <property type="match status" value="1"/>
</dbReference>
<dbReference type="FunFam" id="2.60.40.60:FF:000047">
    <property type="entry name" value="protocadherin-15 isoform X1"/>
    <property type="match status" value="1"/>
</dbReference>
<dbReference type="FunFam" id="2.60.40.60:FF:000048">
    <property type="entry name" value="protocadherin-15 isoform X1"/>
    <property type="match status" value="1"/>
</dbReference>
<dbReference type="FunFam" id="2.60.40.60:FF:000049">
    <property type="entry name" value="protocadherin-15 isoform X1"/>
    <property type="match status" value="1"/>
</dbReference>
<dbReference type="FunFam" id="2.60.40.60:FF:000050">
    <property type="entry name" value="protocadherin-15 isoform X1"/>
    <property type="match status" value="1"/>
</dbReference>
<dbReference type="FunFam" id="2.60.40.60:FF:000054">
    <property type="entry name" value="protocadherin-15 isoform X1"/>
    <property type="match status" value="1"/>
</dbReference>
<dbReference type="FunFam" id="2.60.40.60:FF:000055">
    <property type="entry name" value="protocadherin-15 isoform X1"/>
    <property type="match status" value="1"/>
</dbReference>
<dbReference type="FunFam" id="2.60.40.60:FF:000056">
    <property type="entry name" value="protocadherin-15 isoform X1"/>
    <property type="match status" value="1"/>
</dbReference>
<dbReference type="FunFam" id="2.60.40.60:FF:000057">
    <property type="entry name" value="protocadherin-15 isoform X1"/>
    <property type="match status" value="1"/>
</dbReference>
<dbReference type="FunFam" id="2.60.40.60:FF:000063">
    <property type="entry name" value="protocadherin-15 isoform X1"/>
    <property type="match status" value="1"/>
</dbReference>
<dbReference type="FunFam" id="2.60.40.60:FF:000070">
    <property type="entry name" value="protocadherin-15 isoform X1"/>
    <property type="match status" value="1"/>
</dbReference>
<dbReference type="Gene3D" id="2.60.40.3430">
    <property type="match status" value="1"/>
</dbReference>
<dbReference type="Gene3D" id="2.60.40.60">
    <property type="entry name" value="Cadherins"/>
    <property type="match status" value="10"/>
</dbReference>
<dbReference type="InterPro" id="IPR050971">
    <property type="entry name" value="Cadherin-domain_protein"/>
</dbReference>
<dbReference type="InterPro" id="IPR002126">
    <property type="entry name" value="Cadherin-like_dom"/>
</dbReference>
<dbReference type="InterPro" id="IPR015919">
    <property type="entry name" value="Cadherin-like_sf"/>
</dbReference>
<dbReference type="InterPro" id="IPR020894">
    <property type="entry name" value="Cadherin_CS"/>
</dbReference>
<dbReference type="InterPro" id="IPR041149">
    <property type="entry name" value="EC_dom"/>
</dbReference>
<dbReference type="InterPro" id="IPR030718">
    <property type="entry name" value="EC_dom_sf"/>
</dbReference>
<dbReference type="InterPro" id="IPR056989">
    <property type="entry name" value="PCDH15_12th_dom"/>
</dbReference>
<dbReference type="PANTHER" id="PTHR24025">
    <property type="entry name" value="DESMOGLEIN FAMILY MEMBER"/>
    <property type="match status" value="1"/>
</dbReference>
<dbReference type="PANTHER" id="PTHR24025:SF23">
    <property type="entry name" value="NEURAL-CADHERIN"/>
    <property type="match status" value="1"/>
</dbReference>
<dbReference type="Pfam" id="PF00028">
    <property type="entry name" value="Cadherin"/>
    <property type="match status" value="8"/>
</dbReference>
<dbReference type="Pfam" id="PF18432">
    <property type="entry name" value="ECD"/>
    <property type="match status" value="1"/>
</dbReference>
<dbReference type="Pfam" id="PF23206">
    <property type="entry name" value="PCDH15_12th"/>
    <property type="match status" value="1"/>
</dbReference>
<dbReference type="PRINTS" id="PR00205">
    <property type="entry name" value="CADHERIN"/>
</dbReference>
<dbReference type="SMART" id="SM00112">
    <property type="entry name" value="CA"/>
    <property type="match status" value="11"/>
</dbReference>
<dbReference type="SUPFAM" id="SSF49313">
    <property type="entry name" value="Cadherin-like"/>
    <property type="match status" value="10"/>
</dbReference>
<dbReference type="PROSITE" id="PS00232">
    <property type="entry name" value="CADHERIN_1"/>
    <property type="match status" value="4"/>
</dbReference>
<dbReference type="PROSITE" id="PS50268">
    <property type="entry name" value="CADHERIN_2"/>
    <property type="match status" value="10"/>
</dbReference>
<protein>
    <recommendedName>
        <fullName>Protocadherin-15</fullName>
    </recommendedName>
</protein>
<feature type="signal peptide" evidence="2">
    <location>
        <begin position="1"/>
        <end position="26"/>
    </location>
</feature>
<feature type="chain" id="PRO_0000422923" description="Protocadherin-15">
    <location>
        <begin position="27"/>
        <end position="1899"/>
    </location>
</feature>
<feature type="topological domain" description="Extracellular" evidence="2">
    <location>
        <begin position="27"/>
        <end position="1376"/>
    </location>
</feature>
<feature type="transmembrane region" description="Helical" evidence="2">
    <location>
        <begin position="1377"/>
        <end position="1397"/>
    </location>
</feature>
<feature type="topological domain" description="Cytoplasmic" evidence="2">
    <location>
        <begin position="1398"/>
        <end position="1899"/>
    </location>
</feature>
<feature type="domain" description="Cadherin 1" evidence="3">
    <location>
        <begin position="38"/>
        <end position="147"/>
    </location>
</feature>
<feature type="domain" description="Cadherin 2" evidence="3">
    <location>
        <begin position="148"/>
        <end position="265"/>
    </location>
</feature>
<feature type="domain" description="Cadherin 3" evidence="3">
    <location>
        <begin position="278"/>
        <end position="395"/>
    </location>
</feature>
<feature type="domain" description="Cadherin 4" evidence="3">
    <location>
        <begin position="396"/>
        <end position="509"/>
    </location>
</feature>
<feature type="domain" description="Cadherin 5" evidence="3">
    <location>
        <begin position="510"/>
        <end position="616"/>
    </location>
</feature>
<feature type="domain" description="Cadherin 6" evidence="3">
    <location>
        <begin position="617"/>
        <end position="717"/>
    </location>
</feature>
<feature type="domain" description="Cadherin 7" evidence="3">
    <location>
        <begin position="719"/>
        <end position="819"/>
    </location>
</feature>
<feature type="domain" description="Cadherin 8" evidence="3">
    <location>
        <begin position="820"/>
        <end position="926"/>
    </location>
</feature>
<feature type="domain" description="Cadherin 9" evidence="3">
    <location>
        <begin position="927"/>
        <end position="1035"/>
    </location>
</feature>
<feature type="domain" description="Cadherin 10" evidence="3">
    <location>
        <begin position="1037"/>
        <end position="1144"/>
    </location>
</feature>
<feature type="domain" description="Cadherin 11" evidence="3">
    <location>
        <begin position="1145"/>
        <end position="1259"/>
    </location>
</feature>
<feature type="region of interest" description="Disordered" evidence="4">
    <location>
        <begin position="1668"/>
        <end position="1687"/>
    </location>
</feature>
<feature type="region of interest" description="Disordered" evidence="4">
    <location>
        <begin position="1700"/>
        <end position="1721"/>
    </location>
</feature>
<feature type="region of interest" description="Disordered" evidence="4">
    <location>
        <begin position="1734"/>
        <end position="1820"/>
    </location>
</feature>
<feature type="compositionally biased region" description="Pro residues" evidence="4">
    <location>
        <begin position="1706"/>
        <end position="1717"/>
    </location>
</feature>
<feature type="compositionally biased region" description="Pro residues" evidence="4">
    <location>
        <begin position="1743"/>
        <end position="1773"/>
    </location>
</feature>
<feature type="compositionally biased region" description="Low complexity" evidence="4">
    <location>
        <begin position="1774"/>
        <end position="1791"/>
    </location>
</feature>
<feature type="compositionally biased region" description="Pro residues" evidence="4">
    <location>
        <begin position="1804"/>
        <end position="1814"/>
    </location>
</feature>
<feature type="disulfide bond" evidence="1">
    <location>
        <begin position="32"/>
        <end position="120"/>
    </location>
</feature>
<feature type="splice variant" id="VSP_047419" description="In isoform 9." evidence="6">
    <original>D</original>
    <variation>E</variation>
    <location>
        <position position="106"/>
    </location>
</feature>
<feature type="splice variant" id="VSP_047420" description="In isoform 9." evidence="6">
    <location>
        <begin position="107"/>
        <end position="1269"/>
    </location>
</feature>
<feature type="splice variant" id="VSP_047421" description="In isoform 11." evidence="6">
    <original>P</original>
    <variation>V</variation>
    <location>
        <position position="107"/>
    </location>
</feature>
<feature type="splice variant" id="VSP_047422" description="In isoform 11." evidence="6">
    <location>
        <begin position="108"/>
        <end position="1899"/>
    </location>
</feature>
<feature type="splice variant" id="VSP_047423" description="In isoform 10." evidence="6">
    <original>L</original>
    <variation>V</variation>
    <location>
        <position position="159"/>
    </location>
</feature>
<feature type="splice variant" id="VSP_047424" description="In isoform 10." evidence="6">
    <location>
        <begin position="160"/>
        <end position="1899"/>
    </location>
</feature>
<feature type="splice variant" id="VSP_047425" description="In isoform 8." evidence="6">
    <original>TSNRTFDIPLTLSGAVVLRERLNYEEKTRYFVIVQANDRAQNLHERRTSTTTLTVDVLDGDDLGPMFLPCVLVNNTRDCRPLTYQASLPELTDPVHVNPISVTPPIQAIDQDRNIQPPSDRPGILYSILVGTPEDYPQYFHMNLTTAELTLLKPINRDLHQKFDLVIKAEQDNGHPLPAFANL</original>
    <variation>WARKKRIKLIVDPEYETSSTGEDSAPDSSQRSRLNNPNIQNNVNGNIYIAQNGSVVRTRRVCLANNLKVTSPVTLGKQFKKLDKLAVTHEENVPLNTLSKGSSSSDKVNTRPCSVSFASSIGAENIVTKPGGSKMKSTEEQESVVDNEDTKEPLESHSEHTQSDEEELWMGPWNNLHIPMTKL</variation>
    <location>
        <begin position="199"/>
        <end position="381"/>
    </location>
</feature>
<feature type="splice variant" id="VSP_047426" description="In isoform 2." evidence="6">
    <original>TSNRTFDIPLTLSGAVVLRERLNYEEKTRYFVIV</original>
    <variation>SFSSLPFPTKQGKKVSLRRRRSAESYKQLCFPCY</variation>
    <location>
        <begin position="199"/>
        <end position="232"/>
    </location>
</feature>
<feature type="splice variant" id="VSP_047427" description="In isoform 2." evidence="6">
    <location>
        <begin position="233"/>
        <end position="1899"/>
    </location>
</feature>
<feature type="splice variant" id="VSP_047428" description="In isoform 7." evidence="6">
    <original>VHVNPISVTPPIQAIDQDRNIQPPSDRPGILYSILVGTPEDYPQYFHMNLTTAELTLLKPINRDLHQKFDLVIKAEQDNGHPLPAFANLHIE</original>
    <variation>NVPLNTLSKGSSSSDKVNTRPCSVSFASSIGAENIVTKPGGSKMKSTEEQESVVDNEDTKEPLESHSEHTQSDEEELWMGPWNNLHIPMTKL</variation>
    <location>
        <begin position="293"/>
        <end position="384"/>
    </location>
</feature>
<feature type="splice variant" id="VSP_047429" description="In isoform 6." evidence="6">
    <original>HVNPISVTP</original>
    <variation>PRWQTAGYQ</variation>
    <location>
        <begin position="294"/>
        <end position="302"/>
    </location>
</feature>
<feature type="splice variant" id="VSP_047430" description="In isoform 6." evidence="6">
    <location>
        <begin position="303"/>
        <end position="1899"/>
    </location>
</feature>
<feature type="splice variant" id="VSP_047431" description="In isoform 5." evidence="6">
    <original>AEQDNGHPLPAFANLHIEVLDENNQKPYFTKSTYEGFILESSPVGTTISDSRNLTSPLQITVLDNDVEETKDPQLHLFLNDYNTFFTVTQSGITRYLTLLQPVDREAQQLYTFSMIASDGVQESTPVTVNIVVIDANDNSPTFSNISYNVKIYTDMGPGEGVIKLTAVDADEGPNGQIVYEILAGDQGDFIINDRTGLIAIAPGVVLSVGRSYALTVKASDSAPPAQRRSSITTVYIEVLPPNNQSPPRFPQ</original>
    <variation>ELSMESGIDPGQEYYGQDYYSYEHGYELPQYGSRRRLLSPSGMYDEYGEVMVENDGGYYYSPHGSTAEEWARKKRIKLIVDPEYETSSTGEDSAPDSSQRSRLNNPNIQNNVNGNIYIAQNGSVVRTRRVCLANNLKVTSPVTLGKQFKKLDKLAVTHEENVPLNTLSKGSSSSDKVNTRPCSVSFASSIGAENIVTKPGGSKMKSTEEQESVVDNEDTKEPLESHSEHTQSDEEELWMGPWNNLHIPMTKL</variation>
    <location>
        <begin position="367"/>
        <end position="618"/>
    </location>
</feature>
<feature type="splice variant" id="VSP_047432" description="In isoform 8." evidence="6">
    <location>
        <begin position="382"/>
        <end position="1899"/>
    </location>
</feature>
<feature type="splice variant" id="VSP_047433" description="In isoform 7." evidence="6">
    <location>
        <begin position="385"/>
        <end position="1899"/>
    </location>
</feature>
<feature type="splice variant" id="VSP_047434" description="In isoform 5." evidence="6">
    <location>
        <begin position="619"/>
        <end position="1899"/>
    </location>
</feature>
<feature type="splice variant" id="VSP_047435" description="In isoform 3." evidence="6">
    <original>ILFLLYHFQQSRGKKSVLEEGDRQRVISSFASRAIEAHKQSNINGSLNNNLPKSSSNITFLSDENPLTTQNPLYVEGVTQSPAAAGLLRKRSDALDTLSPMQLVLRDASLGGSHRAWTVPAHVTKRHAPGSLSRPVIMDPVQWQQERLKAENEGTENQHSRVDISSPLFQKISGPTLTVKEKARQFEQQALQEMKQVKSPDVKSTRSPTHSICLQERDNTLEQSPKSVFASPCLRSSPLSSPTPCEVVEPEPSAVPSVIITHHDYPEELSPPPTRKPTPPSFRIKKPVCQSFLAPQTKGEVTENIPDPPKTPPPPPPLLPPPPPSPPLLPPHPPTLPLASVPSSSSLPSTQHLSPAKHSKSPAKQPAVPPPAAVPEPPPRRELKGILKNIQNLAAIEKSVANMYSQIDKNHVLPKHISKLKPVATPELPTPEAAAEHNQQNGNLSCVVEELEKRFPSQSTAL</original>
    <variation>MRGYAQQEQQQLLRPSLLRPEELSMESGIDPGQEYYGQDYYSYEHGYELPQYGSRRRLLSPSGMYDEYGEVMVENDGGYYYSPHGSTAEEGMSQSRGPSSRGISQRAGAQIEGRPLDGGMDLRHGSGRAYRTSQGRRKLKAVMHLSRVAVSAHKPVGRSESAHSPWKKAKIFPMILQKVKGSRKDSSYAKLMSARQADGEKSMIIRGSYFQKSTDDRPSMRKLNHVLKRISVSRKFQEPTSKDAVHLGGKEEEERDEAKSGVSISITAESEHEESDYEKKKKRRRKYSSDESSAKSSSSGSESEDKDYLTVTLDQDEATESTVDSDEESGHDIGDSDDGSGSSSSSESEEDSSEEDSDEEESDSDEDDSLSQSSSTQSSFSKSGTSESSSRRSTGRSSTKSRGSSSRGRARRSSQKSVSSNTSGASCRKTSGSSYKSKTSSASLEIEDTIEEVSEEDEQADAEQVGASPDETIDNTKNKTVSKTSANAKSAKNAATEEDKRRKSGVNSGDNGDESAEEVDTDASDKEETVSKNGSEISVTSKGTGGIKSTASATSGRTATSPDTETQSSDINWARKKRIKLIVDPEYETSSTGEDSAPDSSQRSRLNNPNIQNNVNGNIYIAQNGSVVRTRRVCLANNLKVTSPVTLGKQFKKLDKLAVTHEENVPLNTLSKGSSSSDKVNTRPCSVSFASSIGAENIVTKPGGSKMKSTEEQESVVDNEDTKEPLESHSEHTQSDEEELWMGPWNNLHIPMTKL</variation>
    <location>
        <begin position="1438"/>
        <end position="1899"/>
    </location>
</feature>
<feature type="splice variant" id="VSP_047436" description="In isoform 4 and isoform 9." evidence="6">
    <original>ILFLLYHFQQSRGKKSVLEEGDRQRVISSFASRAIEAHKQSNINGSLNNNLPKSSSNITFLSDENPLTTQNPLYVEGVTQSPAAAGLLRKRSDALDTLSPMQLVLRDASLGGSHRAWTVPAHVTKRHAPGSLSRPVIMDPVQWQQERLKAENEGTENQHSRVDISSPLFQKISGPTLTVKEKARQFEQQALQEMKQVKSPDVKSTRSPTHSICLQERDNTLEQSPKSVFASPCLRSSPLSSPTPCEVVEPEPSAVPSVIITHHDYPEELSPPPTRKPTPPSFRIKKPVCQSFLAPQTKGEVTENIPDPPKTPPPPPPLLPPPPPSPPLLPPHPPTLPLASVPSSSSLPSTQHLSPAKHSKSPAKQPAVPPPAAVPEPPPRRELKGILKNIQNLAAIEKSVANMYSQIDKNHVLPKHISKLKPVATPELPTPEAAAEHNQQNGNLSCVVEELEKRFPSQSTAL</original>
    <variation>MRGYAQQEQQQLLRPSLLRPEELSMESGIDPGQEYYGQDYYSYEHGYELPQYGSRRRLLSPSGMYDEYGEVMVENDGGYYYSPHGSTAEEWARKKRIKLIVDPEYETSSTGEDSAPDSSQRSRLNNPNIQNNVNGNIYIAQNGSVVRTRRVCLANNLKVTSPVTLGKQFKKLDKLAVTHEENVPLNTLSKGSSSSDKVNTRPCSVSFASSIGAENIVTKPGGSKMKSTEEQESVVDNEDTKEPLESHSEHTQSDEEELWMGPWNNLHIPMTKL</variation>
    <location>
        <begin position="1438"/>
        <end position="1899"/>
    </location>
</feature>
<reference key="1">
    <citation type="journal article" date="2006" name="J. Neurosci.">
        <title>The tip-link antigen, a protein associated with the transduction complex of sensory hair cells, is protocadherin-15.</title>
        <authorList>
            <person name="Ahmed Z.M."/>
            <person name="Goodyear R."/>
            <person name="Riazuddin S."/>
            <person name="Lagziel A."/>
            <person name="Legan P.K."/>
            <person name="Behra M."/>
            <person name="Burgess S.M."/>
            <person name="Lilley K.S."/>
            <person name="Wilcox E.R."/>
            <person name="Riazuddin S."/>
            <person name="Griffith A.J."/>
            <person name="Frolenkov G.I."/>
            <person name="Belyantseva I.A."/>
            <person name="Richardson G.P."/>
            <person name="Friedman T.B."/>
        </authorList>
    </citation>
    <scope>NUCLEOTIDE SEQUENCE [MRNA] (ISOFORMS 2; 3; 4; 5; 6; 7; 8; 9; 10 AND 11)</scope>
    <scope>PROTEIN SEQUENCE OF 37-51; 64-93; 228-237; 462-471; 631-643; 858-878; 918-928; 992-1016; 1220-1230; 1265-1292 AND 1599-1608</scope>
    <scope>TISSUE SPECIFICITY</scope>
    <source>
        <tissue>Brain</tissue>
        <tissue>Retina</tissue>
    </source>
</reference>
<reference key="2">
    <citation type="journal article" date="2004" name="Nature">
        <title>Sequence and comparative analysis of the chicken genome provide unique perspectives on vertebrate evolution.</title>
        <authorList>
            <person name="Hillier L.W."/>
            <person name="Miller W."/>
            <person name="Birney E."/>
            <person name="Warren W."/>
            <person name="Hardison R.C."/>
            <person name="Ponting C.P."/>
            <person name="Bork P."/>
            <person name="Burt D.W."/>
            <person name="Groenen M.A.M."/>
            <person name="Delany M.E."/>
            <person name="Dodgson J.B."/>
            <person name="Chinwalla A.T."/>
            <person name="Cliften P.F."/>
            <person name="Clifton S.W."/>
            <person name="Delehaunty K.D."/>
            <person name="Fronick C."/>
            <person name="Fulton R.S."/>
            <person name="Graves T.A."/>
            <person name="Kremitzki C."/>
            <person name="Layman D."/>
            <person name="Magrini V."/>
            <person name="McPherson J.D."/>
            <person name="Miner T.L."/>
            <person name="Minx P."/>
            <person name="Nash W.E."/>
            <person name="Nhan M.N."/>
            <person name="Nelson J.O."/>
            <person name="Oddy L.G."/>
            <person name="Pohl C.S."/>
            <person name="Randall-Maher J."/>
            <person name="Smith S.M."/>
            <person name="Wallis J.W."/>
            <person name="Yang S.-P."/>
            <person name="Romanov M.N."/>
            <person name="Rondelli C.M."/>
            <person name="Paton B."/>
            <person name="Smith J."/>
            <person name="Morrice D."/>
            <person name="Daniels L."/>
            <person name="Tempest H.G."/>
            <person name="Robertson L."/>
            <person name="Masabanda J.S."/>
            <person name="Griffin D.K."/>
            <person name="Vignal A."/>
            <person name="Fillon V."/>
            <person name="Jacobbson L."/>
            <person name="Kerje S."/>
            <person name="Andersson L."/>
            <person name="Crooijmans R.P."/>
            <person name="Aerts J."/>
            <person name="van der Poel J.J."/>
            <person name="Ellegren H."/>
            <person name="Caldwell R.B."/>
            <person name="Hubbard S.J."/>
            <person name="Grafham D.V."/>
            <person name="Kierzek A.M."/>
            <person name="McLaren S.R."/>
            <person name="Overton I.M."/>
            <person name="Arakawa H."/>
            <person name="Beattie K.J."/>
            <person name="Bezzubov Y."/>
            <person name="Boardman P.E."/>
            <person name="Bonfield J.K."/>
            <person name="Croning M.D.R."/>
            <person name="Davies R.M."/>
            <person name="Francis M.D."/>
            <person name="Humphray S.J."/>
            <person name="Scott C.E."/>
            <person name="Taylor R.G."/>
            <person name="Tickle C."/>
            <person name="Brown W.R.A."/>
            <person name="Rogers J."/>
            <person name="Buerstedde J.-M."/>
            <person name="Wilson S.A."/>
            <person name="Stubbs L."/>
            <person name="Ovcharenko I."/>
            <person name="Gordon L."/>
            <person name="Lucas S."/>
            <person name="Miller M.M."/>
            <person name="Inoko H."/>
            <person name="Shiina T."/>
            <person name="Kaufman J."/>
            <person name="Salomonsen J."/>
            <person name="Skjoedt K."/>
            <person name="Wong G.K.-S."/>
            <person name="Wang J."/>
            <person name="Liu B."/>
            <person name="Wang J."/>
            <person name="Yu J."/>
            <person name="Yang H."/>
            <person name="Nefedov M."/>
            <person name="Koriabine M."/>
            <person name="Dejong P.J."/>
            <person name="Goodstadt L."/>
            <person name="Webber C."/>
            <person name="Dickens N.J."/>
            <person name="Letunic I."/>
            <person name="Suyama M."/>
            <person name="Torrents D."/>
            <person name="von Mering C."/>
            <person name="Zdobnov E.M."/>
            <person name="Makova K."/>
            <person name="Nekrutenko A."/>
            <person name="Elnitski L."/>
            <person name="Eswara P."/>
            <person name="King D.C."/>
            <person name="Yang S.-P."/>
            <person name="Tyekucheva S."/>
            <person name="Radakrishnan A."/>
            <person name="Harris R.S."/>
            <person name="Chiaromonte F."/>
            <person name="Taylor J."/>
            <person name="He J."/>
            <person name="Rijnkels M."/>
            <person name="Griffiths-Jones S."/>
            <person name="Ureta-Vidal A."/>
            <person name="Hoffman M.M."/>
            <person name="Severin J."/>
            <person name="Searle S.M.J."/>
            <person name="Law A.S."/>
            <person name="Speed D."/>
            <person name="Waddington D."/>
            <person name="Cheng Z."/>
            <person name="Tuzun E."/>
            <person name="Eichler E."/>
            <person name="Bao Z."/>
            <person name="Flicek P."/>
            <person name="Shteynberg D.D."/>
            <person name="Brent M.R."/>
            <person name="Bye J.M."/>
            <person name="Huckle E.J."/>
            <person name="Chatterji S."/>
            <person name="Dewey C."/>
            <person name="Pachter L."/>
            <person name="Kouranov A."/>
            <person name="Mourelatos Z."/>
            <person name="Hatzigeorgiou A.G."/>
            <person name="Paterson A.H."/>
            <person name="Ivarie R."/>
            <person name="Brandstrom M."/>
            <person name="Axelsson E."/>
            <person name="Backstrom N."/>
            <person name="Berlin S."/>
            <person name="Webster M.T."/>
            <person name="Pourquie O."/>
            <person name="Reymond A."/>
            <person name="Ucla C."/>
            <person name="Antonarakis S.E."/>
            <person name="Long M."/>
            <person name="Emerson J.J."/>
            <person name="Betran E."/>
            <person name="Dupanloup I."/>
            <person name="Kaessmann H."/>
            <person name="Hinrichs A.S."/>
            <person name="Bejerano G."/>
            <person name="Furey T.S."/>
            <person name="Harte R.A."/>
            <person name="Raney B."/>
            <person name="Siepel A."/>
            <person name="Kent W.J."/>
            <person name="Haussler D."/>
            <person name="Eyras E."/>
            <person name="Castelo R."/>
            <person name="Abril J.F."/>
            <person name="Castellano S."/>
            <person name="Camara F."/>
            <person name="Parra G."/>
            <person name="Guigo R."/>
            <person name="Bourque G."/>
            <person name="Tesler G."/>
            <person name="Pevzner P.A."/>
            <person name="Smit A."/>
            <person name="Fulton L.A."/>
            <person name="Mardis E.R."/>
            <person name="Wilson R.K."/>
        </authorList>
    </citation>
    <scope>NUCLEOTIDE SEQUENCE [LARGE SCALE GENOMIC DNA]</scope>
    <source>
        <strain>Red jungle fowl</strain>
    </source>
</reference>
<proteinExistence type="evidence at protein level"/>
<evidence type="ECO:0000250" key="1"/>
<evidence type="ECO:0000255" key="2"/>
<evidence type="ECO:0000255" key="3">
    <source>
        <dbReference type="PROSITE-ProRule" id="PRU00043"/>
    </source>
</evidence>
<evidence type="ECO:0000256" key="4">
    <source>
        <dbReference type="SAM" id="MobiDB-lite"/>
    </source>
</evidence>
<evidence type="ECO:0000269" key="5">
    <source>
    </source>
</evidence>
<evidence type="ECO:0000303" key="6">
    <source>
    </source>
</evidence>
<evidence type="ECO:0000305" key="7"/>
<name>PCD15_CHICK</name>
<sequence>MLQQFCLWKWLAVGIAVATILASSLAQNDEDCKLARTGPPATIVPIDEESRNGTILVDNMLIKGTAAGPDPTIELSLKDNVDYWVILDPISQRLYLNSTGRVLDRDPPMSIQSIVVQVQCVNKKVGTIINHEVRIVVRDRNDNSPQFQQQRYYVAVNELTPVGTTIFTGFSGNNGATDIDDGPNGQIEYVIQYNPNDKTSNRTFDIPLTLSGAVVLRERLNYEEKTRYFVIVQANDRAQNLHERRTSTTTLTVDVLDGDDLGPMFLPCVLVNNTRDCRPLTYQASLPELTDPVHVNPISVTPPIQAIDQDRNIQPPSDRPGILYSILVGTPEDYPQYFHMNLTTAELTLLKPINRDLHQKFDLVIKAEQDNGHPLPAFANLHIEVLDENNQKPYFTKSTYEGFILESSPVGTTISDSRNLTSPLQITVLDNDVEETKDPQLHLFLNDYNTFFTVTQSGITRYLTLLQPVDREAQQLYTFSMIASDGVQESTPVTVNIVVIDANDNSPTFSNISYNVKIYTDMGPGEGVIKLTAVDADEGPNGQIVYEILAGDQGDFIINDRTGLIAIAPGVVLSVGRSYALTVKASDSAPPAQRRSSITTVYIEVLPPNNQSPPRFPQLMYSLEVSEAMRTGAILLNLQAFDREGDPIRYLIENGDPQQVFNLSQSSGLLALGKPLDRESTDRYILIVTASDGRPDGTSTATVNIVVTDVNDNGPVFDMFLPKNLSVQEEEANAFVGQVRATDPDAGVNGQVHYSLANFKNLFRITSNGSIYTAVKLNREVRDYYELIVEATDGAVDPRRSTLTLAIKVLDIDDNSPVFTNASYSVLVPENLPPGTVFLQIEAKDVDLGSNVTYRIRTQEALEYFALNKYTGELSLLKSLDYESFSDTDATFTFLVEAFDSKGTMPPGLATVTVRVKDMNDYSPVFSKTLYRGMVAPDAVKGTVITTVSAEDQDPPGTPASRVRYKVDVVQFPYSASIFDVEENSGRVVTRVNLNEEPSTVFKLVVIAYDDGDPVKFNTTTVEIAVLQPSVIPRFTQDEYRPPPVSESAPKGTVVTVVMAAALNQTIVYSIVSGNEEDVFAINNRTGVISVKKPLDYERVTSYELRVQADSLQVVRSNLRVPSKSNTAKVFIEVKDENDHAPVFTKKMYIGGVSEDAKMFSSVLKVKADDKDTGNYSAMQYRLIIPPIKDGKEGFVIEAYTGLIKTAMLFKNMRRSYFKFQVIATDDYGKGLSSKADVLVSVVNQLDMQVIVSNVPPTLVEQNKDQLIGILERYVQDQIPGATVVVESIGARRFGDGYSEEDYTKSDLMVYAIDPQTNRAIMRNELFKFLDGKLLDINKEFQPYLGQGGRILEIRTPDVVANVKKQAQAVGYTEGALLALAVIIILCCMPAILIVMVSYRQRQAECAKTARIQMALPAGKPASTAANNLYEELGDSTILFLLYHFQQSRGKKSVLEEGDRQRVISSFASRAIEAHKQSNINGSLNNNLPKSSSNITFLSDENPLTTQNPLYVEGVTQSPAAAGLLRKRSDALDTLSPMQLVLRDASLGGSHRAWTVPAHVTKRHAPGSLSRPVIMDPVQWQQERLKAENEGTENQHSRVDISSPLFQKISGPTLTVKEKARQFEQQALQEMKQVKSPDVKSTRSPTHSICLQERDNTLEQSPKSVFASPCLRSSPLSSPTPCEVVEPEPSAVPSVIITHHDYPEELSPPPTRKPTPPSFRIKKPVCQSFLAPQTKGEVTENIPDPPKTPPPPPPLLPPPPPSPPLLPPHPPTLPLASVPSSSSLPSTQHLSPAKHSKSPAKQPAVPPPAAVPEPPPRRELKGILKNIQNLAAIEKSVANMYSQIDKNHVLPKHISKLKPVATPELPTPEAAAEHNQQNGNLSCVVEELEKRFPSQSTAL</sequence>